<protein>
    <recommendedName>
        <fullName evidence="1">4-hydroxy-3-methylbut-2-en-1-yl diphosphate synthase (flavodoxin)</fullName>
        <ecNumber evidence="1">1.17.7.3</ecNumber>
    </recommendedName>
    <alternativeName>
        <fullName evidence="1">1-hydroxy-2-methyl-2-(E)-butenyl 4-diphosphate synthase</fullName>
    </alternativeName>
</protein>
<reference key="1">
    <citation type="journal article" date="2007" name="J. Bacteriol.">
        <title>The complete genome sequence of Bacillus thuringiensis Al Hakam.</title>
        <authorList>
            <person name="Challacombe J.F."/>
            <person name="Altherr M.R."/>
            <person name="Xie G."/>
            <person name="Bhotika S.S."/>
            <person name="Brown N."/>
            <person name="Bruce D."/>
            <person name="Campbell C.S."/>
            <person name="Campbell M.L."/>
            <person name="Chen J."/>
            <person name="Chertkov O."/>
            <person name="Cleland C."/>
            <person name="Dimitrijevic M."/>
            <person name="Doggett N.A."/>
            <person name="Fawcett J.J."/>
            <person name="Glavina T."/>
            <person name="Goodwin L.A."/>
            <person name="Green L.D."/>
            <person name="Han C.S."/>
            <person name="Hill K.K."/>
            <person name="Hitchcock P."/>
            <person name="Jackson P.J."/>
            <person name="Keim P."/>
            <person name="Kewalramani A.R."/>
            <person name="Longmire J."/>
            <person name="Lucas S."/>
            <person name="Malfatti S."/>
            <person name="Martinez D."/>
            <person name="McMurry K."/>
            <person name="Meincke L.J."/>
            <person name="Misra M."/>
            <person name="Moseman B.L."/>
            <person name="Mundt M."/>
            <person name="Munk A.C."/>
            <person name="Okinaka R.T."/>
            <person name="Parson-Quintana B."/>
            <person name="Reilly L.P."/>
            <person name="Richardson P."/>
            <person name="Robinson D.L."/>
            <person name="Saunders E."/>
            <person name="Tapia R."/>
            <person name="Tesmer J.G."/>
            <person name="Thayer N."/>
            <person name="Thompson L.S."/>
            <person name="Tice H."/>
            <person name="Ticknor L.O."/>
            <person name="Wills P.L."/>
            <person name="Gilna P."/>
            <person name="Brettin T.S."/>
        </authorList>
    </citation>
    <scope>NUCLEOTIDE SEQUENCE [LARGE SCALE GENOMIC DNA]</scope>
    <source>
        <strain>Al Hakam</strain>
    </source>
</reference>
<comment type="function">
    <text evidence="1">Converts 2C-methyl-D-erythritol 2,4-cyclodiphosphate (ME-2,4cPP) into 1-hydroxy-2-methyl-2-(E)-butenyl 4-diphosphate.</text>
</comment>
<comment type="catalytic activity">
    <reaction evidence="1">
        <text>(2E)-4-hydroxy-3-methylbut-2-enyl diphosphate + oxidized [flavodoxin] + H2O + 2 H(+) = 2-C-methyl-D-erythritol 2,4-cyclic diphosphate + reduced [flavodoxin]</text>
        <dbReference type="Rhea" id="RHEA:43604"/>
        <dbReference type="Rhea" id="RHEA-COMP:10622"/>
        <dbReference type="Rhea" id="RHEA-COMP:10623"/>
        <dbReference type="ChEBI" id="CHEBI:15377"/>
        <dbReference type="ChEBI" id="CHEBI:15378"/>
        <dbReference type="ChEBI" id="CHEBI:57618"/>
        <dbReference type="ChEBI" id="CHEBI:58210"/>
        <dbReference type="ChEBI" id="CHEBI:58483"/>
        <dbReference type="ChEBI" id="CHEBI:128753"/>
        <dbReference type="EC" id="1.17.7.3"/>
    </reaction>
</comment>
<comment type="cofactor">
    <cofactor evidence="1">
        <name>[4Fe-4S] cluster</name>
        <dbReference type="ChEBI" id="CHEBI:49883"/>
    </cofactor>
    <text evidence="1">Binds 1 [4Fe-4S] cluster.</text>
</comment>
<comment type="pathway">
    <text evidence="1">Isoprenoid biosynthesis; isopentenyl diphosphate biosynthesis via DXP pathway; isopentenyl diphosphate from 1-deoxy-D-xylulose 5-phosphate: step 5/6.</text>
</comment>
<comment type="similarity">
    <text evidence="1">Belongs to the IspG family.</text>
</comment>
<accession>A0RIQ2</accession>
<feature type="chain" id="PRO_1000011438" description="4-hydroxy-3-methylbut-2-en-1-yl diphosphate synthase (flavodoxin)">
    <location>
        <begin position="1"/>
        <end position="370"/>
    </location>
</feature>
<feature type="binding site" evidence="1">
    <location>
        <position position="268"/>
    </location>
    <ligand>
        <name>[4Fe-4S] cluster</name>
        <dbReference type="ChEBI" id="CHEBI:49883"/>
    </ligand>
</feature>
<feature type="binding site" evidence="1">
    <location>
        <position position="271"/>
    </location>
    <ligand>
        <name>[4Fe-4S] cluster</name>
        <dbReference type="ChEBI" id="CHEBI:49883"/>
    </ligand>
</feature>
<feature type="binding site" evidence="1">
    <location>
        <position position="303"/>
    </location>
    <ligand>
        <name>[4Fe-4S] cluster</name>
        <dbReference type="ChEBI" id="CHEBI:49883"/>
    </ligand>
</feature>
<feature type="binding site" evidence="1">
    <location>
        <position position="310"/>
    </location>
    <ligand>
        <name>[4Fe-4S] cluster</name>
        <dbReference type="ChEBI" id="CHEBI:49883"/>
    </ligand>
</feature>
<proteinExistence type="inferred from homology"/>
<organism>
    <name type="scientific">Bacillus thuringiensis (strain Al Hakam)</name>
    <dbReference type="NCBI Taxonomy" id="412694"/>
    <lineage>
        <taxon>Bacteria</taxon>
        <taxon>Bacillati</taxon>
        <taxon>Bacillota</taxon>
        <taxon>Bacilli</taxon>
        <taxon>Bacillales</taxon>
        <taxon>Bacillaceae</taxon>
        <taxon>Bacillus</taxon>
        <taxon>Bacillus cereus group</taxon>
    </lineage>
</organism>
<name>ISPG_BACAH</name>
<gene>
    <name evidence="1" type="primary">ispG</name>
    <name type="ordered locus">BALH_3871</name>
</gene>
<keyword id="KW-0004">4Fe-4S</keyword>
<keyword id="KW-0408">Iron</keyword>
<keyword id="KW-0411">Iron-sulfur</keyword>
<keyword id="KW-0414">Isoprene biosynthesis</keyword>
<keyword id="KW-0479">Metal-binding</keyword>
<keyword id="KW-0560">Oxidoreductase</keyword>
<evidence type="ECO:0000255" key="1">
    <source>
        <dbReference type="HAMAP-Rule" id="MF_00159"/>
    </source>
</evidence>
<dbReference type="EC" id="1.17.7.3" evidence="1"/>
<dbReference type="EMBL" id="CP000485">
    <property type="protein sequence ID" value="ABK87095.1"/>
    <property type="molecule type" value="Genomic_DNA"/>
</dbReference>
<dbReference type="SMR" id="A0RIQ2"/>
<dbReference type="KEGG" id="btl:BALH_3871"/>
<dbReference type="HOGENOM" id="CLU_042258_0_0_9"/>
<dbReference type="UniPathway" id="UPA00056">
    <property type="reaction ID" value="UER00096"/>
</dbReference>
<dbReference type="GO" id="GO:0051539">
    <property type="term" value="F:4 iron, 4 sulfur cluster binding"/>
    <property type="evidence" value="ECO:0007669"/>
    <property type="project" value="UniProtKB-UniRule"/>
</dbReference>
<dbReference type="GO" id="GO:0046429">
    <property type="term" value="F:4-hydroxy-3-methylbut-2-en-1-yl diphosphate synthase activity (ferredoxin)"/>
    <property type="evidence" value="ECO:0007669"/>
    <property type="project" value="UniProtKB-UniRule"/>
</dbReference>
<dbReference type="GO" id="GO:0141197">
    <property type="term" value="F:4-hydroxy-3-methylbut-2-enyl-diphosphate synthase activity (flavodoxin)"/>
    <property type="evidence" value="ECO:0007669"/>
    <property type="project" value="UniProtKB-EC"/>
</dbReference>
<dbReference type="GO" id="GO:0005506">
    <property type="term" value="F:iron ion binding"/>
    <property type="evidence" value="ECO:0007669"/>
    <property type="project" value="InterPro"/>
</dbReference>
<dbReference type="GO" id="GO:0019288">
    <property type="term" value="P:isopentenyl diphosphate biosynthetic process, methylerythritol 4-phosphate pathway"/>
    <property type="evidence" value="ECO:0007669"/>
    <property type="project" value="UniProtKB-UniRule"/>
</dbReference>
<dbReference type="GO" id="GO:0016114">
    <property type="term" value="P:terpenoid biosynthetic process"/>
    <property type="evidence" value="ECO:0007669"/>
    <property type="project" value="InterPro"/>
</dbReference>
<dbReference type="FunFam" id="3.20.20.20:FF:000001">
    <property type="entry name" value="4-hydroxy-3-methylbut-2-en-1-yl diphosphate synthase (flavodoxin)"/>
    <property type="match status" value="1"/>
</dbReference>
<dbReference type="FunFam" id="3.30.413.10:FF:000005">
    <property type="entry name" value="4-hydroxy-3-methylbut-2-en-1-yl diphosphate synthase (flavodoxin)"/>
    <property type="match status" value="1"/>
</dbReference>
<dbReference type="Gene3D" id="3.20.20.20">
    <property type="entry name" value="Dihydropteroate synthase-like"/>
    <property type="match status" value="1"/>
</dbReference>
<dbReference type="Gene3D" id="3.30.413.10">
    <property type="entry name" value="Sulfite Reductase Hemoprotein, domain 1"/>
    <property type="match status" value="1"/>
</dbReference>
<dbReference type="HAMAP" id="MF_00159">
    <property type="entry name" value="IspG"/>
    <property type="match status" value="1"/>
</dbReference>
<dbReference type="InterPro" id="IPR011005">
    <property type="entry name" value="Dihydropteroate_synth-like_sf"/>
</dbReference>
<dbReference type="InterPro" id="IPR016425">
    <property type="entry name" value="IspG_bac"/>
</dbReference>
<dbReference type="InterPro" id="IPR004588">
    <property type="entry name" value="IspG_bac-typ"/>
</dbReference>
<dbReference type="InterPro" id="IPR045854">
    <property type="entry name" value="NO2/SO3_Rdtase_4Fe4S_sf"/>
</dbReference>
<dbReference type="NCBIfam" id="TIGR00612">
    <property type="entry name" value="ispG_gcpE"/>
    <property type="match status" value="1"/>
</dbReference>
<dbReference type="NCBIfam" id="NF001540">
    <property type="entry name" value="PRK00366.1"/>
    <property type="match status" value="1"/>
</dbReference>
<dbReference type="PANTHER" id="PTHR30454">
    <property type="entry name" value="4-HYDROXY-3-METHYLBUT-2-EN-1-YL DIPHOSPHATE SYNTHASE"/>
    <property type="match status" value="1"/>
</dbReference>
<dbReference type="PANTHER" id="PTHR30454:SF0">
    <property type="entry name" value="4-HYDROXY-3-METHYLBUT-2-EN-1-YL DIPHOSPHATE SYNTHASE (FERREDOXIN), CHLOROPLASTIC"/>
    <property type="match status" value="1"/>
</dbReference>
<dbReference type="Pfam" id="PF04551">
    <property type="entry name" value="GcpE"/>
    <property type="match status" value="1"/>
</dbReference>
<dbReference type="PIRSF" id="PIRSF004640">
    <property type="entry name" value="IspG"/>
    <property type="match status" value="1"/>
</dbReference>
<dbReference type="SUPFAM" id="SSF51717">
    <property type="entry name" value="Dihydropteroate synthetase-like"/>
    <property type="match status" value="1"/>
</dbReference>
<dbReference type="SUPFAM" id="SSF56014">
    <property type="entry name" value="Nitrite and sulphite reductase 4Fe-4S domain-like"/>
    <property type="match status" value="1"/>
</dbReference>
<sequence length="370" mass="40027">MNEMTHRTKTRPVKVGNLTIGGNNELIIQSMTTTKTHDVEATVAEIKRLEEAGCQVVRVAVPDERAANAIADIKKQINIPLVADIHFDYRLALKAIEGGIDKVRINPGNIGRRHKVEAVVNAAKERGIPIRIGVNAGSLERHILEKYGYPTADGMVESALHHIKILEDLDFHDIIVSMKASDVNLAIEAYEKAARAFDYPLHLGITESGTLFAGTVKSAAGLGAILNKGIGNTLRISLSADPVEEVKVARELLKSFGLASNAATLISCPTCGRIEIDLISIANEVEEYISTLQVPIKVAVLGCAVNGPGEAREADIGIAGARGEGLLFRKGQVVRKVPEEIMVEELKKEIDVIAAEMAAEREKEKETQEQ</sequence>